<keyword id="KW-0963">Cytoplasm</keyword>
<keyword id="KW-0238">DNA-binding</keyword>
<keyword id="KW-1185">Reference proteome</keyword>
<keyword id="KW-0678">Repressor</keyword>
<keyword id="KW-0804">Transcription</keyword>
<keyword id="KW-0805">Transcription regulation</keyword>
<organism>
    <name type="scientific">Escherichia coli O157:H7</name>
    <dbReference type="NCBI Taxonomy" id="83334"/>
    <lineage>
        <taxon>Bacteria</taxon>
        <taxon>Pseudomonadati</taxon>
        <taxon>Pseudomonadota</taxon>
        <taxon>Gammaproteobacteria</taxon>
        <taxon>Enterobacterales</taxon>
        <taxon>Enterobacteriaceae</taxon>
        <taxon>Escherichia</taxon>
    </lineage>
</organism>
<comment type="function">
    <text evidence="1">Transcriptional regulator that represses the expression of the lsr operon in the absence of the quorum-sensing signaling molecule autoinducer 2 (AI-2) (By similarity). It also represses the expression of the lsrRK operon (By similarity). Acts by binding directly to the lsrA and lsrR promoter regions (By similarity). In the presence of phosphorylated autoinducer-2 (phospho-AI-2), LsrR is inactivated, leading to the transcription of the genes (By similarity).</text>
</comment>
<comment type="activity regulation">
    <text evidence="1">Inactivated by phosphorylated autoinducer-2 (phospho-AI-2) (By similarity). Phospho-AI-2 acts by binding to LsrR, which is then unable to bind to the promoter regions, allowing the transcription of the target genes (By similarity).</text>
</comment>
<comment type="subcellular location">
    <subcellularLocation>
        <location evidence="2">Cytoplasm</location>
    </subcellularLocation>
</comment>
<comment type="similarity">
    <text evidence="2">Belongs to the SorC transcriptional regulatory family.</text>
</comment>
<name>LSRR_ECO57</name>
<sequence>MTINDSVISEQGMCEEEQVARIAWFYYHDGLTQSEISDRLGLTRLKVSRLLEKGHQSGIIRVQINSRFEGCLEYETQLRRQFSLQHVRVIPGLADADVGGRLGIGAAHMLMSLLQPQQMLAIGFGEATMNTLQRLSGFISSQQIRLVTLSGGVGSYMTGIGQLNAACSVNIIPAPLRASSADIARTLKNENCVKDVLLAAQAADVAIVGIGAVSQQDDATIIRSGYISQGEQLMIGRKGAVGDILGYFFDAKGDVVTDIKIHNELIGLPLSALKTIPVRVGVAGGENKAEAIAAAMKGGYINALVTDQDTAAAILRS</sequence>
<feature type="chain" id="PRO_0000351615" description="Transcriptional regulator LsrR">
    <location>
        <begin position="1"/>
        <end position="317"/>
    </location>
</feature>
<feature type="DNA-binding region" description="H-T-H motif" evidence="2">
    <location>
        <begin position="33"/>
        <end position="56"/>
    </location>
</feature>
<reference key="1">
    <citation type="journal article" date="2001" name="Nature">
        <title>Genome sequence of enterohaemorrhagic Escherichia coli O157:H7.</title>
        <authorList>
            <person name="Perna N.T."/>
            <person name="Plunkett G. III"/>
            <person name="Burland V."/>
            <person name="Mau B."/>
            <person name="Glasner J.D."/>
            <person name="Rose D.J."/>
            <person name="Mayhew G.F."/>
            <person name="Evans P.S."/>
            <person name="Gregor J."/>
            <person name="Kirkpatrick H.A."/>
            <person name="Posfai G."/>
            <person name="Hackett J."/>
            <person name="Klink S."/>
            <person name="Boutin A."/>
            <person name="Shao Y."/>
            <person name="Miller L."/>
            <person name="Grotbeck E.J."/>
            <person name="Davis N.W."/>
            <person name="Lim A."/>
            <person name="Dimalanta E.T."/>
            <person name="Potamousis K."/>
            <person name="Apodaca J."/>
            <person name="Anantharaman T.S."/>
            <person name="Lin J."/>
            <person name="Yen G."/>
            <person name="Schwartz D.C."/>
            <person name="Welch R.A."/>
            <person name="Blattner F.R."/>
        </authorList>
    </citation>
    <scope>NUCLEOTIDE SEQUENCE [LARGE SCALE GENOMIC DNA]</scope>
    <source>
        <strain>O157:H7 / EDL933 / ATCC 700927 / EHEC</strain>
    </source>
</reference>
<reference key="2">
    <citation type="journal article" date="2001" name="DNA Res.">
        <title>Complete genome sequence of enterohemorrhagic Escherichia coli O157:H7 and genomic comparison with a laboratory strain K-12.</title>
        <authorList>
            <person name="Hayashi T."/>
            <person name="Makino K."/>
            <person name="Ohnishi M."/>
            <person name="Kurokawa K."/>
            <person name="Ishii K."/>
            <person name="Yokoyama K."/>
            <person name="Han C.-G."/>
            <person name="Ohtsubo E."/>
            <person name="Nakayama K."/>
            <person name="Murata T."/>
            <person name="Tanaka M."/>
            <person name="Tobe T."/>
            <person name="Iida T."/>
            <person name="Takami H."/>
            <person name="Honda T."/>
            <person name="Sasakawa C."/>
            <person name="Ogasawara N."/>
            <person name="Yasunaga T."/>
            <person name="Kuhara S."/>
            <person name="Shiba T."/>
            <person name="Hattori M."/>
            <person name="Shinagawa H."/>
        </authorList>
    </citation>
    <scope>NUCLEOTIDE SEQUENCE [LARGE SCALE GENOMIC DNA]</scope>
    <source>
        <strain>O157:H7 / Sakai / RIMD 0509952 / EHEC</strain>
    </source>
</reference>
<protein>
    <recommendedName>
        <fullName evidence="1">Transcriptional regulator LsrR</fullName>
    </recommendedName>
</protein>
<gene>
    <name type="primary">lsrR</name>
    <name type="ordered locus">Z2193</name>
    <name type="ordered locus">ECs2119</name>
</gene>
<dbReference type="EMBL" id="AE005174">
    <property type="protein sequence ID" value="AAG56254.1"/>
    <property type="molecule type" value="Genomic_DNA"/>
</dbReference>
<dbReference type="EMBL" id="BA000007">
    <property type="protein sequence ID" value="BAB35542.1"/>
    <property type="molecule type" value="Genomic_DNA"/>
</dbReference>
<dbReference type="PIR" id="B85724">
    <property type="entry name" value="B85724"/>
</dbReference>
<dbReference type="PIR" id="G90893">
    <property type="entry name" value="G90893"/>
</dbReference>
<dbReference type="RefSeq" id="NP_310146.1">
    <property type="nucleotide sequence ID" value="NC_002695.1"/>
</dbReference>
<dbReference type="RefSeq" id="WP_000154352.1">
    <property type="nucleotide sequence ID" value="NZ_VOAI01000024.1"/>
</dbReference>
<dbReference type="SMR" id="Q8XAY6"/>
<dbReference type="STRING" id="155864.Z2193"/>
<dbReference type="GeneID" id="917323"/>
<dbReference type="KEGG" id="ece:Z2193"/>
<dbReference type="KEGG" id="ecs:ECs_2119"/>
<dbReference type="PATRIC" id="fig|386585.9.peg.2225"/>
<dbReference type="eggNOG" id="COG2390">
    <property type="taxonomic scope" value="Bacteria"/>
</dbReference>
<dbReference type="HOGENOM" id="CLU_054506_0_1_6"/>
<dbReference type="OMA" id="WGRSTIH"/>
<dbReference type="Proteomes" id="UP000000558">
    <property type="component" value="Chromosome"/>
</dbReference>
<dbReference type="Proteomes" id="UP000002519">
    <property type="component" value="Chromosome"/>
</dbReference>
<dbReference type="GO" id="GO:0005737">
    <property type="term" value="C:cytoplasm"/>
    <property type="evidence" value="ECO:0007669"/>
    <property type="project" value="UniProtKB-SubCell"/>
</dbReference>
<dbReference type="GO" id="GO:0030246">
    <property type="term" value="F:carbohydrate binding"/>
    <property type="evidence" value="ECO:0007669"/>
    <property type="project" value="InterPro"/>
</dbReference>
<dbReference type="GO" id="GO:0003677">
    <property type="term" value="F:DNA binding"/>
    <property type="evidence" value="ECO:0007669"/>
    <property type="project" value="UniProtKB-KW"/>
</dbReference>
<dbReference type="FunFam" id="1.10.10.10:FF:000195">
    <property type="entry name" value="LsrR family transcriptional regulator"/>
    <property type="match status" value="1"/>
</dbReference>
<dbReference type="FunFam" id="3.40.50.1360:FF:000012">
    <property type="entry name" value="LsrR family transcriptional regulator"/>
    <property type="match status" value="1"/>
</dbReference>
<dbReference type="Gene3D" id="3.40.50.1360">
    <property type="match status" value="1"/>
</dbReference>
<dbReference type="Gene3D" id="1.10.10.10">
    <property type="entry name" value="Winged helix-like DNA-binding domain superfamily/Winged helix DNA-binding domain"/>
    <property type="match status" value="1"/>
</dbReference>
<dbReference type="InterPro" id="IPR037171">
    <property type="entry name" value="NagB/RpiA_transferase-like"/>
</dbReference>
<dbReference type="InterPro" id="IPR051054">
    <property type="entry name" value="SorC_transcr_regulators"/>
</dbReference>
<dbReference type="InterPro" id="IPR007324">
    <property type="entry name" value="Sugar-bd_dom_put"/>
</dbReference>
<dbReference type="InterPro" id="IPR036388">
    <property type="entry name" value="WH-like_DNA-bd_sf"/>
</dbReference>
<dbReference type="NCBIfam" id="NF011947">
    <property type="entry name" value="PRK15418.1"/>
    <property type="match status" value="1"/>
</dbReference>
<dbReference type="PANTHER" id="PTHR34294:SF1">
    <property type="entry name" value="TRANSCRIPTIONAL REGULATOR LSRR"/>
    <property type="match status" value="1"/>
</dbReference>
<dbReference type="PANTHER" id="PTHR34294">
    <property type="entry name" value="TRANSCRIPTIONAL REGULATOR-RELATED"/>
    <property type="match status" value="1"/>
</dbReference>
<dbReference type="Pfam" id="PF04198">
    <property type="entry name" value="Sugar-bind"/>
    <property type="match status" value="1"/>
</dbReference>
<dbReference type="SUPFAM" id="SSF100950">
    <property type="entry name" value="NagB/RpiA/CoA transferase-like"/>
    <property type="match status" value="1"/>
</dbReference>
<accession>Q8XAY6</accession>
<accession>Q7ADZ8</accession>
<proteinExistence type="inferred from homology"/>
<evidence type="ECO:0000250" key="1">
    <source>
        <dbReference type="UniProtKB" id="P76141"/>
    </source>
</evidence>
<evidence type="ECO:0000305" key="2"/>